<protein>
    <recommendedName>
        <fullName evidence="1">Translation factor GUF1, mitochondrial</fullName>
        <ecNumber>3.6.5.-</ecNumber>
    </recommendedName>
    <alternativeName>
        <fullName evidence="1">Elongation factor 4 homolog</fullName>
        <shortName evidence="1">EF-4</shortName>
    </alternativeName>
    <alternativeName>
        <fullName evidence="1">GTPase GUF1</fullName>
    </alternativeName>
    <alternativeName>
        <fullName evidence="1">Ribosomal back-translocase</fullName>
    </alternativeName>
</protein>
<accession>C5FMX6</accession>
<evidence type="ECO:0000255" key="1">
    <source>
        <dbReference type="HAMAP-Rule" id="MF_03137"/>
    </source>
</evidence>
<evidence type="ECO:0000305" key="2"/>
<sequence>MRGCLQPARWLTTATLRRPLLSCPRQLPTRYNPFPRPFHHAPVLQARQPSKPLSLVEERIDAIPIERYRNFCIVAHVDHGKSTLSDRLLELTGTIKPGENKQVLDKLDVERERGITVKAQTCTMLYNHRGKDYLLHLIDTPGHVDFRTEVSRSYASCGGALLLVDASQGVQAQTVANFYLAFAQGLTLVPVINKVDLPSADPERALEQMKTTFELDVDKAVRVSAKTGLNVQELLPAIIESIPALLLVDSWYSTYKGVIILTRVFDGEVKAGDQLVSFATGLKYTVGEVGIMYPSQTPQSVLRAGQVGYIYFNPGMKRSQEAKIGDTFTKVGCESLVEPLPGFEEPKSMVFVAAYPVDSNDFHHLEESINQLLLNDRSVTMQKESSEALGAGFRLGFLGTLHCSVFEDRLRQEHGASIILTPPTVPCKVIWKDGKETIFTNPSRFPDEDTLRVKVAELQEPYVLATITFPEEYLGRVMELCEANRGEQVSMEFFTATQVILKYQLPLAQLVDDFFGKLKGSTKGYASIDYEESEWRKSNVVKLQLLVNKTPVDAVSRIVHSSQANRLGRQWVTKFKEHVERQMFEVIIQAAVGRNVLARETIKPYRKDVLAKLHASDITRRKKLLEKQKEGRKRLKAVDSAMVAIFLARVPVNNGGSKDLFVWVWMGVWIPRQL</sequence>
<comment type="function">
    <text evidence="1">Promotes mitochondrial protein synthesis. May act as a fidelity factor of the translation reaction, by catalyzing a one-codon backward translocation of tRNAs on improperly translocated ribosomes. Binds to mitochondrial ribosomes in a GTP-dependent manner.</text>
</comment>
<comment type="catalytic activity">
    <reaction evidence="1">
        <text>GTP + H2O = GDP + phosphate + H(+)</text>
        <dbReference type="Rhea" id="RHEA:19669"/>
        <dbReference type="ChEBI" id="CHEBI:15377"/>
        <dbReference type="ChEBI" id="CHEBI:15378"/>
        <dbReference type="ChEBI" id="CHEBI:37565"/>
        <dbReference type="ChEBI" id="CHEBI:43474"/>
        <dbReference type="ChEBI" id="CHEBI:58189"/>
    </reaction>
</comment>
<comment type="subcellular location">
    <subcellularLocation>
        <location evidence="1">Mitochondrion inner membrane</location>
        <topology evidence="1">Peripheral membrane protein</topology>
        <orientation evidence="1">Matrix side</orientation>
    </subcellularLocation>
</comment>
<comment type="similarity">
    <text evidence="2">Belongs to the TRAFAC class translation factor GTPase superfamily. Classic translation factor GTPase family. LepA subfamily.</text>
</comment>
<comment type="sequence caution" evidence="2">
    <conflict type="erroneous initiation">
        <sequence resource="EMBL-CDS" id="EEQ31212"/>
    </conflict>
    <text>Extended N-terminus.</text>
</comment>
<dbReference type="EC" id="3.6.5.-"/>
<dbReference type="EMBL" id="DS995704">
    <property type="protein sequence ID" value="EEQ31212.1"/>
    <property type="status" value="ALT_INIT"/>
    <property type="molecule type" value="Genomic_DNA"/>
</dbReference>
<dbReference type="RefSeq" id="XP_002846294.1">
    <property type="nucleotide sequence ID" value="XM_002846248.1"/>
</dbReference>
<dbReference type="SMR" id="C5FMX6"/>
<dbReference type="STRING" id="554155.C5FMX6"/>
<dbReference type="GeneID" id="9226208"/>
<dbReference type="eggNOG" id="KOG0462">
    <property type="taxonomic scope" value="Eukaryota"/>
</dbReference>
<dbReference type="HOGENOM" id="CLU_009995_3_1_1"/>
<dbReference type="OrthoDB" id="1074at2759"/>
<dbReference type="Proteomes" id="UP000002035">
    <property type="component" value="Unassembled WGS sequence"/>
</dbReference>
<dbReference type="GO" id="GO:0005743">
    <property type="term" value="C:mitochondrial inner membrane"/>
    <property type="evidence" value="ECO:0007669"/>
    <property type="project" value="UniProtKB-SubCell"/>
</dbReference>
<dbReference type="GO" id="GO:0005759">
    <property type="term" value="C:mitochondrial matrix"/>
    <property type="evidence" value="ECO:0007669"/>
    <property type="project" value="UniProtKB-UniRule"/>
</dbReference>
<dbReference type="GO" id="GO:0005525">
    <property type="term" value="F:GTP binding"/>
    <property type="evidence" value="ECO:0007669"/>
    <property type="project" value="UniProtKB-UniRule"/>
</dbReference>
<dbReference type="GO" id="GO:0003924">
    <property type="term" value="F:GTPase activity"/>
    <property type="evidence" value="ECO:0007669"/>
    <property type="project" value="UniProtKB-UniRule"/>
</dbReference>
<dbReference type="GO" id="GO:0097177">
    <property type="term" value="F:mitochondrial ribosome binding"/>
    <property type="evidence" value="ECO:0007669"/>
    <property type="project" value="TreeGrafter"/>
</dbReference>
<dbReference type="GO" id="GO:0045727">
    <property type="term" value="P:positive regulation of translation"/>
    <property type="evidence" value="ECO:0007669"/>
    <property type="project" value="UniProtKB-UniRule"/>
</dbReference>
<dbReference type="GO" id="GO:0006412">
    <property type="term" value="P:translation"/>
    <property type="evidence" value="ECO:0007669"/>
    <property type="project" value="UniProtKB-KW"/>
</dbReference>
<dbReference type="CDD" id="cd03699">
    <property type="entry name" value="EF4_II"/>
    <property type="match status" value="1"/>
</dbReference>
<dbReference type="CDD" id="cd01890">
    <property type="entry name" value="LepA"/>
    <property type="match status" value="1"/>
</dbReference>
<dbReference type="CDD" id="cd03709">
    <property type="entry name" value="lepA_C"/>
    <property type="match status" value="1"/>
</dbReference>
<dbReference type="FunFam" id="3.40.50.300:FF:000078">
    <property type="entry name" value="Elongation factor 4"/>
    <property type="match status" value="1"/>
</dbReference>
<dbReference type="FunFam" id="2.40.30.10:FF:000015">
    <property type="entry name" value="Translation factor GUF1, mitochondrial"/>
    <property type="match status" value="1"/>
</dbReference>
<dbReference type="FunFam" id="3.30.70.240:FF:000007">
    <property type="entry name" value="Translation factor GUF1, mitochondrial"/>
    <property type="match status" value="1"/>
</dbReference>
<dbReference type="FunFam" id="3.30.70.2570:FF:000001">
    <property type="entry name" value="Translation factor GUF1, mitochondrial"/>
    <property type="match status" value="1"/>
</dbReference>
<dbReference type="FunFam" id="3.30.70.870:FF:000004">
    <property type="entry name" value="Translation factor GUF1, mitochondrial"/>
    <property type="match status" value="1"/>
</dbReference>
<dbReference type="Gene3D" id="3.30.70.240">
    <property type="match status" value="1"/>
</dbReference>
<dbReference type="Gene3D" id="3.30.70.2570">
    <property type="entry name" value="Elongation factor 4, C-terminal domain"/>
    <property type="match status" value="1"/>
</dbReference>
<dbReference type="Gene3D" id="3.30.70.870">
    <property type="entry name" value="Elongation Factor G (Translational Gtpase), domain 3"/>
    <property type="match status" value="1"/>
</dbReference>
<dbReference type="Gene3D" id="3.40.50.300">
    <property type="entry name" value="P-loop containing nucleotide triphosphate hydrolases"/>
    <property type="match status" value="1"/>
</dbReference>
<dbReference type="Gene3D" id="2.40.30.10">
    <property type="entry name" value="Translation factors"/>
    <property type="match status" value="1"/>
</dbReference>
<dbReference type="HAMAP" id="MF_00071">
    <property type="entry name" value="LepA"/>
    <property type="match status" value="1"/>
</dbReference>
<dbReference type="InterPro" id="IPR006297">
    <property type="entry name" value="EF-4"/>
</dbReference>
<dbReference type="InterPro" id="IPR035647">
    <property type="entry name" value="EFG_III/V"/>
</dbReference>
<dbReference type="InterPro" id="IPR000640">
    <property type="entry name" value="EFG_V-like"/>
</dbReference>
<dbReference type="InterPro" id="IPR031157">
    <property type="entry name" value="G_TR_CS"/>
</dbReference>
<dbReference type="InterPro" id="IPR038363">
    <property type="entry name" value="LepA_C_sf"/>
</dbReference>
<dbReference type="InterPro" id="IPR013842">
    <property type="entry name" value="LepA_CTD"/>
</dbReference>
<dbReference type="InterPro" id="IPR035654">
    <property type="entry name" value="LepA_IV"/>
</dbReference>
<dbReference type="InterPro" id="IPR027417">
    <property type="entry name" value="P-loop_NTPase"/>
</dbReference>
<dbReference type="InterPro" id="IPR005225">
    <property type="entry name" value="Small_GTP-bd"/>
</dbReference>
<dbReference type="InterPro" id="IPR000795">
    <property type="entry name" value="T_Tr_GTP-bd_dom"/>
</dbReference>
<dbReference type="InterPro" id="IPR009000">
    <property type="entry name" value="Transl_B-barrel_sf"/>
</dbReference>
<dbReference type="NCBIfam" id="TIGR01393">
    <property type="entry name" value="lepA"/>
    <property type="match status" value="1"/>
</dbReference>
<dbReference type="NCBIfam" id="TIGR00231">
    <property type="entry name" value="small_GTP"/>
    <property type="match status" value="1"/>
</dbReference>
<dbReference type="PANTHER" id="PTHR43512:SF7">
    <property type="entry name" value="TRANSLATION FACTOR GUF1, MITOCHONDRIAL"/>
    <property type="match status" value="1"/>
</dbReference>
<dbReference type="PANTHER" id="PTHR43512">
    <property type="entry name" value="TRANSLATION FACTOR GUF1-RELATED"/>
    <property type="match status" value="1"/>
</dbReference>
<dbReference type="Pfam" id="PF00679">
    <property type="entry name" value="EFG_C"/>
    <property type="match status" value="1"/>
</dbReference>
<dbReference type="Pfam" id="PF00009">
    <property type="entry name" value="GTP_EFTU"/>
    <property type="match status" value="1"/>
</dbReference>
<dbReference type="Pfam" id="PF06421">
    <property type="entry name" value="LepA_C"/>
    <property type="match status" value="1"/>
</dbReference>
<dbReference type="PRINTS" id="PR00315">
    <property type="entry name" value="ELONGATNFCT"/>
</dbReference>
<dbReference type="SUPFAM" id="SSF54980">
    <property type="entry name" value="EF-G C-terminal domain-like"/>
    <property type="match status" value="2"/>
</dbReference>
<dbReference type="SUPFAM" id="SSF52540">
    <property type="entry name" value="P-loop containing nucleoside triphosphate hydrolases"/>
    <property type="match status" value="1"/>
</dbReference>
<dbReference type="SUPFAM" id="SSF50447">
    <property type="entry name" value="Translation proteins"/>
    <property type="match status" value="1"/>
</dbReference>
<dbReference type="PROSITE" id="PS00301">
    <property type="entry name" value="G_TR_1"/>
    <property type="match status" value="1"/>
</dbReference>
<dbReference type="PROSITE" id="PS51722">
    <property type="entry name" value="G_TR_2"/>
    <property type="match status" value="1"/>
</dbReference>
<organism>
    <name type="scientific">Arthroderma otae (strain ATCC MYA-4605 / CBS 113480)</name>
    <name type="common">Microsporum canis</name>
    <dbReference type="NCBI Taxonomy" id="554155"/>
    <lineage>
        <taxon>Eukaryota</taxon>
        <taxon>Fungi</taxon>
        <taxon>Dikarya</taxon>
        <taxon>Ascomycota</taxon>
        <taxon>Pezizomycotina</taxon>
        <taxon>Eurotiomycetes</taxon>
        <taxon>Eurotiomycetidae</taxon>
        <taxon>Onygenales</taxon>
        <taxon>Arthrodermataceae</taxon>
        <taxon>Microsporum</taxon>
    </lineage>
</organism>
<proteinExistence type="inferred from homology"/>
<keyword id="KW-0342">GTP-binding</keyword>
<keyword id="KW-0378">Hydrolase</keyword>
<keyword id="KW-0472">Membrane</keyword>
<keyword id="KW-0496">Mitochondrion</keyword>
<keyword id="KW-0999">Mitochondrion inner membrane</keyword>
<keyword id="KW-0547">Nucleotide-binding</keyword>
<keyword id="KW-0648">Protein biosynthesis</keyword>
<keyword id="KW-1185">Reference proteome</keyword>
<keyword id="KW-0809">Transit peptide</keyword>
<gene>
    <name evidence="1" type="primary">GUF1</name>
    <name type="ORF">MCYG_04031</name>
</gene>
<reference key="1">
    <citation type="journal article" date="2012" name="MBio">
        <title>Comparative genome analysis of Trichophyton rubrum and related dermatophytes reveals candidate genes involved in infection.</title>
        <authorList>
            <person name="Martinez D.A."/>
            <person name="Oliver B.G."/>
            <person name="Graeser Y."/>
            <person name="Goldberg J.M."/>
            <person name="Li W."/>
            <person name="Martinez-Rossi N.M."/>
            <person name="Monod M."/>
            <person name="Shelest E."/>
            <person name="Barton R.C."/>
            <person name="Birch E."/>
            <person name="Brakhage A.A."/>
            <person name="Chen Z."/>
            <person name="Gurr S.J."/>
            <person name="Heiman D."/>
            <person name="Heitman J."/>
            <person name="Kosti I."/>
            <person name="Rossi A."/>
            <person name="Saif S."/>
            <person name="Samalova M."/>
            <person name="Saunders C.W."/>
            <person name="Shea T."/>
            <person name="Summerbell R.C."/>
            <person name="Xu J."/>
            <person name="Young S."/>
            <person name="Zeng Q."/>
            <person name="Birren B.W."/>
            <person name="Cuomo C.A."/>
            <person name="White T.C."/>
        </authorList>
    </citation>
    <scope>NUCLEOTIDE SEQUENCE [LARGE SCALE GENOMIC DNA]</scope>
    <source>
        <strain>ATCC MYA-4605 / CBS 113480</strain>
    </source>
</reference>
<feature type="transit peptide" description="Mitochondrion" evidence="1">
    <location>
        <begin position="1"/>
        <end position="48"/>
    </location>
</feature>
<feature type="chain" id="PRO_0000402891" description="Translation factor GUF1, mitochondrial">
    <location>
        <begin position="49"/>
        <end position="674"/>
    </location>
</feature>
<feature type="domain" description="tr-type G">
    <location>
        <begin position="66"/>
        <end position="246"/>
    </location>
</feature>
<feature type="binding site" evidence="1">
    <location>
        <begin position="75"/>
        <end position="82"/>
    </location>
    <ligand>
        <name>GTP</name>
        <dbReference type="ChEBI" id="CHEBI:37565"/>
    </ligand>
</feature>
<feature type="binding site" evidence="1">
    <location>
        <begin position="139"/>
        <end position="143"/>
    </location>
    <ligand>
        <name>GTP</name>
        <dbReference type="ChEBI" id="CHEBI:37565"/>
    </ligand>
</feature>
<feature type="binding site" evidence="1">
    <location>
        <begin position="193"/>
        <end position="196"/>
    </location>
    <ligand>
        <name>GTP</name>
        <dbReference type="ChEBI" id="CHEBI:37565"/>
    </ligand>
</feature>
<name>GUF1_ARTOC</name>